<comment type="function">
    <text>Lysis proteins are required for both colicin release and partial cell lysis.</text>
</comment>
<comment type="subcellular location">
    <subcellularLocation>
        <location evidence="3">Cell outer membrane</location>
        <topology evidence="1">Lipid-anchor</topology>
    </subcellularLocation>
</comment>
<protein>
    <recommendedName>
        <fullName>Lysis protein for colicin A</fullName>
    </recommendedName>
</protein>
<accession>P06962</accession>
<organism>
    <name type="scientific">Citrobacter freundii</name>
    <dbReference type="NCBI Taxonomy" id="546"/>
    <lineage>
        <taxon>Bacteria</taxon>
        <taxon>Pseudomonadati</taxon>
        <taxon>Pseudomonadota</taxon>
        <taxon>Gammaproteobacteria</taxon>
        <taxon>Enterobacterales</taxon>
        <taxon>Enterobacteriaceae</taxon>
        <taxon>Citrobacter</taxon>
        <taxon>Citrobacter freundii complex</taxon>
    </lineage>
</organism>
<gene>
    <name type="primary">cal</name>
</gene>
<proteinExistence type="inferred from homology"/>
<reference key="1">
    <citation type="journal article" date="1985" name="Mol. Gen. Genet.">
        <title>Lysis protein encoded by plasmid ColA-CA31. Gene sequence and export.</title>
        <authorList>
            <person name="Cavard D."/>
            <person name="Lloubes R."/>
            <person name="Morlon J."/>
            <person name="Chartier M."/>
            <person name="Lazdunski C."/>
        </authorList>
    </citation>
    <scope>NUCLEOTIDE SEQUENCE [GENOMIC DNA]</scope>
</reference>
<reference key="2">
    <citation type="journal article" date="1988" name="Mol. Gen. Genet.">
        <title>The complete nucleotide sequence of the colicinogenic plasmid ColA. High extent of homology with ColE1.</title>
        <authorList>
            <person name="Morlon J."/>
            <person name="Chartier M."/>
            <person name="Bidaud M."/>
            <person name="Lazdunski C."/>
        </authorList>
    </citation>
    <scope>NUCLEOTIDE SEQUENCE [GENOMIC DNA]</scope>
</reference>
<keyword id="KW-0998">Cell outer membrane</keyword>
<keyword id="KW-0449">Lipoprotein</keyword>
<keyword id="KW-0472">Membrane</keyword>
<keyword id="KW-0564">Palmitate</keyword>
<keyword id="KW-0614">Plasmid</keyword>
<keyword id="KW-0732">Signal</keyword>
<name>LYS1_CITFR</name>
<dbReference type="EMBL" id="X02391">
    <property type="protein sequence ID" value="CAA26233.1"/>
    <property type="molecule type" value="Genomic_DNA"/>
</dbReference>
<dbReference type="EMBL" id="M37402">
    <property type="protein sequence ID" value="AAA72881.1"/>
    <property type="molecule type" value="Genomic_DNA"/>
</dbReference>
<dbReference type="PIR" id="S07307">
    <property type="entry name" value="S07307"/>
</dbReference>
<dbReference type="RefSeq" id="WP_008323621.1">
    <property type="nucleotide sequence ID" value="NZ_MDCX01000274.1"/>
</dbReference>
<dbReference type="RefSeq" id="YP_004933727.1">
    <property type="nucleotide sequence ID" value="NC_016151.1"/>
</dbReference>
<dbReference type="SMR" id="P06962"/>
<dbReference type="TCDB" id="1.A.73.1.2">
    <property type="family name" value="the colicin lysis protein (clp) family"/>
</dbReference>
<dbReference type="GO" id="GO:0009279">
    <property type="term" value="C:cell outer membrane"/>
    <property type="evidence" value="ECO:0007669"/>
    <property type="project" value="UniProtKB-SubCell"/>
</dbReference>
<dbReference type="GO" id="GO:0019835">
    <property type="term" value="P:cytolysis"/>
    <property type="evidence" value="ECO:0007669"/>
    <property type="project" value="InterPro"/>
</dbReference>
<dbReference type="InterPro" id="IPR003059">
    <property type="entry name" value="Lysis_col"/>
</dbReference>
<dbReference type="Pfam" id="PF02402">
    <property type="entry name" value="Lysis_col"/>
    <property type="match status" value="1"/>
</dbReference>
<dbReference type="PRINTS" id="PR01297">
    <property type="entry name" value="LYSISCOLICIN"/>
</dbReference>
<dbReference type="PROSITE" id="PS51257">
    <property type="entry name" value="PROKAR_LIPOPROTEIN"/>
    <property type="match status" value="1"/>
</dbReference>
<sequence>MKKIIICVILLAIMLLAACQVNNVRDTGGGSVSPSSIVTGVSMGSDGVGNP</sequence>
<feature type="signal peptide" evidence="1">
    <location>
        <begin position="1"/>
        <end position="18"/>
    </location>
</feature>
<feature type="chain" id="PRO_0000005680" description="Lysis protein for colicin A">
    <location>
        <begin position="19"/>
        <end position="51"/>
    </location>
</feature>
<feature type="region of interest" description="Disordered" evidence="2">
    <location>
        <begin position="27"/>
        <end position="51"/>
    </location>
</feature>
<feature type="lipid moiety-binding region" description="N-palmitoyl cysteine" evidence="1">
    <location>
        <position position="19"/>
    </location>
</feature>
<feature type="lipid moiety-binding region" description="S-diacylglycerol cysteine" evidence="1">
    <location>
        <position position="19"/>
    </location>
</feature>
<evidence type="ECO:0000255" key="1">
    <source>
        <dbReference type="PROSITE-ProRule" id="PRU00303"/>
    </source>
</evidence>
<evidence type="ECO:0000256" key="2">
    <source>
        <dbReference type="SAM" id="MobiDB-lite"/>
    </source>
</evidence>
<evidence type="ECO:0000305" key="3"/>
<geneLocation type="plasmid">
    <name>ColA-CA31</name>
</geneLocation>